<comment type="function">
    <text evidence="1">One of several proteins that assist in the late maturation steps of the functional core of the 30S ribosomal subunit. Associates with free 30S ribosomal subunits (but not with 30S subunits that are part of 70S ribosomes or polysomes). Required for efficient processing of 16S rRNA. May interact with the 5'-terminal helix region of 16S rRNA.</text>
</comment>
<comment type="subunit">
    <text evidence="1">Monomer. Binds 30S ribosomal subunits, but not 50S ribosomal subunits or 70S ribosomes.</text>
</comment>
<comment type="subcellular location">
    <subcellularLocation>
        <location evidence="1">Cytoplasm</location>
    </subcellularLocation>
</comment>
<comment type="similarity">
    <text evidence="1">Belongs to the RbfA family.</text>
</comment>
<name>RBFA_SALPA</name>
<gene>
    <name evidence="1" type="primary">rbfA</name>
    <name type="ordered locus">SPA3153</name>
</gene>
<accession>Q5PLB1</accession>
<dbReference type="EMBL" id="CP000026">
    <property type="protein sequence ID" value="AAV78980.1"/>
    <property type="molecule type" value="Genomic_DNA"/>
</dbReference>
<dbReference type="RefSeq" id="WP_001040208.1">
    <property type="nucleotide sequence ID" value="NC_006511.1"/>
</dbReference>
<dbReference type="SMR" id="Q5PLB1"/>
<dbReference type="KEGG" id="spt:SPA3153"/>
<dbReference type="HOGENOM" id="CLU_089475_5_0_6"/>
<dbReference type="Proteomes" id="UP000008185">
    <property type="component" value="Chromosome"/>
</dbReference>
<dbReference type="GO" id="GO:0005829">
    <property type="term" value="C:cytosol"/>
    <property type="evidence" value="ECO:0007669"/>
    <property type="project" value="TreeGrafter"/>
</dbReference>
<dbReference type="GO" id="GO:0043024">
    <property type="term" value="F:ribosomal small subunit binding"/>
    <property type="evidence" value="ECO:0007669"/>
    <property type="project" value="TreeGrafter"/>
</dbReference>
<dbReference type="GO" id="GO:0030490">
    <property type="term" value="P:maturation of SSU-rRNA"/>
    <property type="evidence" value="ECO:0007669"/>
    <property type="project" value="UniProtKB-UniRule"/>
</dbReference>
<dbReference type="FunFam" id="3.30.300.20:FF:000007">
    <property type="entry name" value="Ribosome-binding factor A"/>
    <property type="match status" value="1"/>
</dbReference>
<dbReference type="Gene3D" id="3.30.300.20">
    <property type="match status" value="1"/>
</dbReference>
<dbReference type="HAMAP" id="MF_00003">
    <property type="entry name" value="RbfA"/>
    <property type="match status" value="1"/>
</dbReference>
<dbReference type="InterPro" id="IPR015946">
    <property type="entry name" value="KH_dom-like_a/b"/>
</dbReference>
<dbReference type="InterPro" id="IPR000238">
    <property type="entry name" value="RbfA"/>
</dbReference>
<dbReference type="InterPro" id="IPR023799">
    <property type="entry name" value="RbfA_dom_sf"/>
</dbReference>
<dbReference type="InterPro" id="IPR020053">
    <property type="entry name" value="Ribosome-bd_factorA_CS"/>
</dbReference>
<dbReference type="NCBIfam" id="TIGR00082">
    <property type="entry name" value="rbfA"/>
    <property type="match status" value="1"/>
</dbReference>
<dbReference type="PANTHER" id="PTHR33515">
    <property type="entry name" value="RIBOSOME-BINDING FACTOR A, CHLOROPLASTIC-RELATED"/>
    <property type="match status" value="1"/>
</dbReference>
<dbReference type="PANTHER" id="PTHR33515:SF1">
    <property type="entry name" value="RIBOSOME-BINDING FACTOR A, CHLOROPLASTIC-RELATED"/>
    <property type="match status" value="1"/>
</dbReference>
<dbReference type="Pfam" id="PF02033">
    <property type="entry name" value="RBFA"/>
    <property type="match status" value="1"/>
</dbReference>
<dbReference type="SUPFAM" id="SSF89919">
    <property type="entry name" value="Ribosome-binding factor A, RbfA"/>
    <property type="match status" value="1"/>
</dbReference>
<dbReference type="PROSITE" id="PS01319">
    <property type="entry name" value="RBFA"/>
    <property type="match status" value="1"/>
</dbReference>
<reference key="1">
    <citation type="journal article" date="2004" name="Nat. Genet.">
        <title>Comparison of genome degradation in Paratyphi A and Typhi, human-restricted serovars of Salmonella enterica that cause typhoid.</title>
        <authorList>
            <person name="McClelland M."/>
            <person name="Sanderson K.E."/>
            <person name="Clifton S.W."/>
            <person name="Latreille P."/>
            <person name="Porwollik S."/>
            <person name="Sabo A."/>
            <person name="Meyer R."/>
            <person name="Bieri T."/>
            <person name="Ozersky P."/>
            <person name="McLellan M."/>
            <person name="Harkins C.R."/>
            <person name="Wang C."/>
            <person name="Nguyen C."/>
            <person name="Berghoff A."/>
            <person name="Elliott G."/>
            <person name="Kohlberg S."/>
            <person name="Strong C."/>
            <person name="Du F."/>
            <person name="Carter J."/>
            <person name="Kremizki C."/>
            <person name="Layman D."/>
            <person name="Leonard S."/>
            <person name="Sun H."/>
            <person name="Fulton L."/>
            <person name="Nash W."/>
            <person name="Miner T."/>
            <person name="Minx P."/>
            <person name="Delehaunty K."/>
            <person name="Fronick C."/>
            <person name="Magrini V."/>
            <person name="Nhan M."/>
            <person name="Warren W."/>
            <person name="Florea L."/>
            <person name="Spieth J."/>
            <person name="Wilson R.K."/>
        </authorList>
    </citation>
    <scope>NUCLEOTIDE SEQUENCE [LARGE SCALE GENOMIC DNA]</scope>
    <source>
        <strain>ATCC 9150 / SARB42</strain>
    </source>
</reference>
<organism>
    <name type="scientific">Salmonella paratyphi A (strain ATCC 9150 / SARB42)</name>
    <dbReference type="NCBI Taxonomy" id="295319"/>
    <lineage>
        <taxon>Bacteria</taxon>
        <taxon>Pseudomonadati</taxon>
        <taxon>Pseudomonadota</taxon>
        <taxon>Gammaproteobacteria</taxon>
        <taxon>Enterobacterales</taxon>
        <taxon>Enterobacteriaceae</taxon>
        <taxon>Salmonella</taxon>
    </lineage>
</organism>
<protein>
    <recommendedName>
        <fullName evidence="1">Ribosome-binding factor A</fullName>
    </recommendedName>
</protein>
<evidence type="ECO:0000255" key="1">
    <source>
        <dbReference type="HAMAP-Rule" id="MF_00003"/>
    </source>
</evidence>
<sequence>MAKEFGRPQRVAQEMQKEIALILQREIKDPRVGMMTTVSGVEMSRDLAYAKVFVTFLNDQDEAAVKNGIKALQEASGFIRSLLGKAMRLRIVPELTFFYDNSLVEGMRMSNLVTNVVKHDEERRVNPDDSKED</sequence>
<keyword id="KW-0963">Cytoplasm</keyword>
<keyword id="KW-0690">Ribosome biogenesis</keyword>
<feature type="chain" id="PRO_0000102724" description="Ribosome-binding factor A">
    <location>
        <begin position="1"/>
        <end position="133"/>
    </location>
</feature>
<proteinExistence type="inferred from homology"/>